<feature type="chain" id="PRO_0000256334" description="Chorismate synthase">
    <location>
        <begin position="1"/>
        <end position="361"/>
    </location>
</feature>
<feature type="binding site" evidence="1">
    <location>
        <position position="48"/>
    </location>
    <ligand>
        <name>NADP(+)</name>
        <dbReference type="ChEBI" id="CHEBI:58349"/>
    </ligand>
</feature>
<feature type="binding site" evidence="1">
    <location>
        <position position="54"/>
    </location>
    <ligand>
        <name>NADP(+)</name>
        <dbReference type="ChEBI" id="CHEBI:58349"/>
    </ligand>
</feature>
<feature type="binding site" evidence="1">
    <location>
        <begin position="125"/>
        <end position="127"/>
    </location>
    <ligand>
        <name>FMN</name>
        <dbReference type="ChEBI" id="CHEBI:58210"/>
    </ligand>
</feature>
<feature type="binding site" evidence="1">
    <location>
        <begin position="238"/>
        <end position="239"/>
    </location>
    <ligand>
        <name>FMN</name>
        <dbReference type="ChEBI" id="CHEBI:58210"/>
    </ligand>
</feature>
<feature type="binding site" evidence="1">
    <location>
        <position position="278"/>
    </location>
    <ligand>
        <name>FMN</name>
        <dbReference type="ChEBI" id="CHEBI:58210"/>
    </ligand>
</feature>
<feature type="binding site" evidence="1">
    <location>
        <begin position="293"/>
        <end position="297"/>
    </location>
    <ligand>
        <name>FMN</name>
        <dbReference type="ChEBI" id="CHEBI:58210"/>
    </ligand>
</feature>
<feature type="binding site" evidence="1">
    <location>
        <position position="319"/>
    </location>
    <ligand>
        <name>FMN</name>
        <dbReference type="ChEBI" id="CHEBI:58210"/>
    </ligand>
</feature>
<proteinExistence type="inferred from homology"/>
<dbReference type="EC" id="4.2.3.5" evidence="1"/>
<dbReference type="EMBL" id="CP000034">
    <property type="protein sequence ID" value="ABB62597.1"/>
    <property type="molecule type" value="Genomic_DNA"/>
</dbReference>
<dbReference type="RefSeq" id="WP_001297933.1">
    <property type="nucleotide sequence ID" value="NC_007606.1"/>
</dbReference>
<dbReference type="RefSeq" id="YP_404088.1">
    <property type="nucleotide sequence ID" value="NC_007606.1"/>
</dbReference>
<dbReference type="SMR" id="Q32DK8"/>
<dbReference type="STRING" id="300267.SDY_2528"/>
<dbReference type="EnsemblBacteria" id="ABB62597">
    <property type="protein sequence ID" value="ABB62597"/>
    <property type="gene ID" value="SDY_2528"/>
</dbReference>
<dbReference type="KEGG" id="sdy:SDY_2528"/>
<dbReference type="PATRIC" id="fig|300267.13.peg.3044"/>
<dbReference type="HOGENOM" id="CLU_034547_0_2_6"/>
<dbReference type="UniPathway" id="UPA00053">
    <property type="reaction ID" value="UER00090"/>
</dbReference>
<dbReference type="Proteomes" id="UP000002716">
    <property type="component" value="Chromosome"/>
</dbReference>
<dbReference type="GO" id="GO:0005829">
    <property type="term" value="C:cytosol"/>
    <property type="evidence" value="ECO:0007669"/>
    <property type="project" value="TreeGrafter"/>
</dbReference>
<dbReference type="GO" id="GO:0004107">
    <property type="term" value="F:chorismate synthase activity"/>
    <property type="evidence" value="ECO:0007669"/>
    <property type="project" value="UniProtKB-UniRule"/>
</dbReference>
<dbReference type="GO" id="GO:0010181">
    <property type="term" value="F:FMN binding"/>
    <property type="evidence" value="ECO:0007669"/>
    <property type="project" value="TreeGrafter"/>
</dbReference>
<dbReference type="GO" id="GO:0008652">
    <property type="term" value="P:amino acid biosynthetic process"/>
    <property type="evidence" value="ECO:0007669"/>
    <property type="project" value="UniProtKB-KW"/>
</dbReference>
<dbReference type="GO" id="GO:0009073">
    <property type="term" value="P:aromatic amino acid family biosynthetic process"/>
    <property type="evidence" value="ECO:0007669"/>
    <property type="project" value="UniProtKB-KW"/>
</dbReference>
<dbReference type="GO" id="GO:0009423">
    <property type="term" value="P:chorismate biosynthetic process"/>
    <property type="evidence" value="ECO:0007669"/>
    <property type="project" value="UniProtKB-UniRule"/>
</dbReference>
<dbReference type="CDD" id="cd07304">
    <property type="entry name" value="Chorismate_synthase"/>
    <property type="match status" value="1"/>
</dbReference>
<dbReference type="FunFam" id="3.60.150.10:FF:000001">
    <property type="entry name" value="Chorismate synthase"/>
    <property type="match status" value="1"/>
</dbReference>
<dbReference type="Gene3D" id="3.60.150.10">
    <property type="entry name" value="Chorismate synthase AroC"/>
    <property type="match status" value="1"/>
</dbReference>
<dbReference type="HAMAP" id="MF_00300">
    <property type="entry name" value="Chorismate_synth"/>
    <property type="match status" value="1"/>
</dbReference>
<dbReference type="InterPro" id="IPR000453">
    <property type="entry name" value="Chorismate_synth"/>
</dbReference>
<dbReference type="InterPro" id="IPR035904">
    <property type="entry name" value="Chorismate_synth_AroC_sf"/>
</dbReference>
<dbReference type="InterPro" id="IPR020541">
    <property type="entry name" value="Chorismate_synthase_CS"/>
</dbReference>
<dbReference type="NCBIfam" id="TIGR00033">
    <property type="entry name" value="aroC"/>
    <property type="match status" value="1"/>
</dbReference>
<dbReference type="NCBIfam" id="NF003793">
    <property type="entry name" value="PRK05382.1"/>
    <property type="match status" value="1"/>
</dbReference>
<dbReference type="PANTHER" id="PTHR21085">
    <property type="entry name" value="CHORISMATE SYNTHASE"/>
    <property type="match status" value="1"/>
</dbReference>
<dbReference type="PANTHER" id="PTHR21085:SF0">
    <property type="entry name" value="CHORISMATE SYNTHASE"/>
    <property type="match status" value="1"/>
</dbReference>
<dbReference type="Pfam" id="PF01264">
    <property type="entry name" value="Chorismate_synt"/>
    <property type="match status" value="1"/>
</dbReference>
<dbReference type="PIRSF" id="PIRSF001456">
    <property type="entry name" value="Chorismate_synth"/>
    <property type="match status" value="1"/>
</dbReference>
<dbReference type="SUPFAM" id="SSF103263">
    <property type="entry name" value="Chorismate synthase, AroC"/>
    <property type="match status" value="1"/>
</dbReference>
<dbReference type="PROSITE" id="PS00787">
    <property type="entry name" value="CHORISMATE_SYNTHASE_1"/>
    <property type="match status" value="1"/>
</dbReference>
<dbReference type="PROSITE" id="PS00788">
    <property type="entry name" value="CHORISMATE_SYNTHASE_2"/>
    <property type="match status" value="1"/>
</dbReference>
<dbReference type="PROSITE" id="PS00789">
    <property type="entry name" value="CHORISMATE_SYNTHASE_3"/>
    <property type="match status" value="1"/>
</dbReference>
<protein>
    <recommendedName>
        <fullName evidence="1">Chorismate synthase</fullName>
        <shortName evidence="1">CS</shortName>
        <ecNumber evidence="1">4.2.3.5</ecNumber>
    </recommendedName>
    <alternativeName>
        <fullName evidence="1">5-enolpyruvylshikimate-3-phosphate phospholyase</fullName>
    </alternativeName>
</protein>
<organism>
    <name type="scientific">Shigella dysenteriae serotype 1 (strain Sd197)</name>
    <dbReference type="NCBI Taxonomy" id="300267"/>
    <lineage>
        <taxon>Bacteria</taxon>
        <taxon>Pseudomonadati</taxon>
        <taxon>Pseudomonadota</taxon>
        <taxon>Gammaproteobacteria</taxon>
        <taxon>Enterobacterales</taxon>
        <taxon>Enterobacteriaceae</taxon>
        <taxon>Shigella</taxon>
    </lineage>
</organism>
<accession>Q32DK8</accession>
<reference key="1">
    <citation type="journal article" date="2005" name="Nucleic Acids Res.">
        <title>Genome dynamics and diversity of Shigella species, the etiologic agents of bacillary dysentery.</title>
        <authorList>
            <person name="Yang F."/>
            <person name="Yang J."/>
            <person name="Zhang X."/>
            <person name="Chen L."/>
            <person name="Jiang Y."/>
            <person name="Yan Y."/>
            <person name="Tang X."/>
            <person name="Wang J."/>
            <person name="Xiong Z."/>
            <person name="Dong J."/>
            <person name="Xue Y."/>
            <person name="Zhu Y."/>
            <person name="Xu X."/>
            <person name="Sun L."/>
            <person name="Chen S."/>
            <person name="Nie H."/>
            <person name="Peng J."/>
            <person name="Xu J."/>
            <person name="Wang Y."/>
            <person name="Yuan Z."/>
            <person name="Wen Y."/>
            <person name="Yao Z."/>
            <person name="Shen Y."/>
            <person name="Qiang B."/>
            <person name="Hou Y."/>
            <person name="Yu J."/>
            <person name="Jin Q."/>
        </authorList>
    </citation>
    <scope>NUCLEOTIDE SEQUENCE [LARGE SCALE GENOMIC DNA]</scope>
    <source>
        <strain>Sd197</strain>
    </source>
</reference>
<comment type="function">
    <text evidence="1">Catalyzes the anti-1,4-elimination of the C-3 phosphate and the C-6 proR hydrogen from 5-enolpyruvylshikimate-3-phosphate (EPSP) to yield chorismate, which is the branch point compound that serves as the starting substrate for the three terminal pathways of aromatic amino acid biosynthesis. This reaction introduces a second double bond into the aromatic ring system.</text>
</comment>
<comment type="catalytic activity">
    <reaction evidence="1">
        <text>5-O-(1-carboxyvinyl)-3-phosphoshikimate = chorismate + phosphate</text>
        <dbReference type="Rhea" id="RHEA:21020"/>
        <dbReference type="ChEBI" id="CHEBI:29748"/>
        <dbReference type="ChEBI" id="CHEBI:43474"/>
        <dbReference type="ChEBI" id="CHEBI:57701"/>
        <dbReference type="EC" id="4.2.3.5"/>
    </reaction>
</comment>
<comment type="cofactor">
    <cofactor evidence="1">
        <name>FMNH2</name>
        <dbReference type="ChEBI" id="CHEBI:57618"/>
    </cofactor>
    <text evidence="1">Reduced FMN (FMNH(2)).</text>
</comment>
<comment type="pathway">
    <text evidence="1">Metabolic intermediate biosynthesis; chorismate biosynthesis; chorismate from D-erythrose 4-phosphate and phosphoenolpyruvate: step 7/7.</text>
</comment>
<comment type="subunit">
    <text evidence="1">Homotetramer.</text>
</comment>
<comment type="similarity">
    <text evidence="1">Belongs to the chorismate synthase family.</text>
</comment>
<name>AROC_SHIDS</name>
<gene>
    <name evidence="1" type="primary">aroC</name>
    <name type="ordered locus">SDY_2528</name>
</gene>
<sequence>MAGNTIGQLFRVTTFGESHGLALGCIVDGVPPGIPLTEADLQHDLDRRRPGTSRYTTQRREPDQVKILSGVFEGVTTGTSIGLLIENTDQRSQDYSAIKDVFRPGHADYTYEQKYGLRDYRGGGRSSARETAMRVAAGAIAKKYLAEKFGIEIRGCLTQMGDIPLEIKDWSQVEQNPFFCPDPDKIDALDELMRALKKEGDSIGAKVTVVASGVPAGLGEPVFDRLDADIAHALMSINAVKGVEIGDGFDVVALRGSQNRDEITKDGFQSNHAGGILGGISSGQQIIAHMALKPTSSITVPGRTINRFGEEVEMITKGRHDPCVGIRAVPIAEAMLAIVLMDHLLRQRAQNADVKTDIPRW</sequence>
<evidence type="ECO:0000255" key="1">
    <source>
        <dbReference type="HAMAP-Rule" id="MF_00300"/>
    </source>
</evidence>
<keyword id="KW-0028">Amino-acid biosynthesis</keyword>
<keyword id="KW-0057">Aromatic amino acid biosynthesis</keyword>
<keyword id="KW-0274">FAD</keyword>
<keyword id="KW-0285">Flavoprotein</keyword>
<keyword id="KW-0288">FMN</keyword>
<keyword id="KW-0456">Lyase</keyword>
<keyword id="KW-0521">NADP</keyword>
<keyword id="KW-1185">Reference proteome</keyword>